<dbReference type="EMBL" id="CP000753">
    <property type="protein sequence ID" value="ABS10460.1"/>
    <property type="molecule type" value="Genomic_DNA"/>
</dbReference>
<dbReference type="SMR" id="A6WUH1"/>
<dbReference type="KEGG" id="sbm:Shew185_4346"/>
<dbReference type="HOGENOM" id="CLU_033732_1_2_6"/>
<dbReference type="GO" id="GO:0005829">
    <property type="term" value="C:cytosol"/>
    <property type="evidence" value="ECO:0007669"/>
    <property type="project" value="TreeGrafter"/>
</dbReference>
<dbReference type="GO" id="GO:0005525">
    <property type="term" value="F:GTP binding"/>
    <property type="evidence" value="ECO:0007669"/>
    <property type="project" value="UniProtKB-UniRule"/>
</dbReference>
<dbReference type="GO" id="GO:0046872">
    <property type="term" value="F:metal ion binding"/>
    <property type="evidence" value="ECO:0007669"/>
    <property type="project" value="UniProtKB-KW"/>
</dbReference>
<dbReference type="GO" id="GO:0000917">
    <property type="term" value="P:division septum assembly"/>
    <property type="evidence" value="ECO:0007669"/>
    <property type="project" value="UniProtKB-KW"/>
</dbReference>
<dbReference type="CDD" id="cd01876">
    <property type="entry name" value="YihA_EngB"/>
    <property type="match status" value="1"/>
</dbReference>
<dbReference type="FunFam" id="3.40.50.300:FF:000098">
    <property type="entry name" value="Probable GTP-binding protein EngB"/>
    <property type="match status" value="1"/>
</dbReference>
<dbReference type="Gene3D" id="3.40.50.300">
    <property type="entry name" value="P-loop containing nucleotide triphosphate hydrolases"/>
    <property type="match status" value="1"/>
</dbReference>
<dbReference type="HAMAP" id="MF_00321">
    <property type="entry name" value="GTPase_EngB"/>
    <property type="match status" value="1"/>
</dbReference>
<dbReference type="InterPro" id="IPR030393">
    <property type="entry name" value="G_ENGB_dom"/>
</dbReference>
<dbReference type="InterPro" id="IPR006073">
    <property type="entry name" value="GTP-bd"/>
</dbReference>
<dbReference type="InterPro" id="IPR019987">
    <property type="entry name" value="GTP-bd_ribosome_bio_YsxC"/>
</dbReference>
<dbReference type="InterPro" id="IPR027417">
    <property type="entry name" value="P-loop_NTPase"/>
</dbReference>
<dbReference type="NCBIfam" id="TIGR03598">
    <property type="entry name" value="GTPase_YsxC"/>
    <property type="match status" value="1"/>
</dbReference>
<dbReference type="PANTHER" id="PTHR11649:SF13">
    <property type="entry name" value="ENGB-TYPE G DOMAIN-CONTAINING PROTEIN"/>
    <property type="match status" value="1"/>
</dbReference>
<dbReference type="PANTHER" id="PTHR11649">
    <property type="entry name" value="MSS1/TRME-RELATED GTP-BINDING PROTEIN"/>
    <property type="match status" value="1"/>
</dbReference>
<dbReference type="Pfam" id="PF01926">
    <property type="entry name" value="MMR_HSR1"/>
    <property type="match status" value="1"/>
</dbReference>
<dbReference type="SUPFAM" id="SSF52540">
    <property type="entry name" value="P-loop containing nucleoside triphosphate hydrolases"/>
    <property type="match status" value="1"/>
</dbReference>
<dbReference type="PROSITE" id="PS51706">
    <property type="entry name" value="G_ENGB"/>
    <property type="match status" value="1"/>
</dbReference>
<sequence>MTESRIDFRRAKFLISAPDIAHLDQYLPGDVGVEIAFAGRSNAGKSSALNALTEQKSLARTSKTPGRTQLINVFELDAQRRLVDLPGYGFAQVPLALKNKWQQALGEYLQKRACLSGVVVLMDIRHPLKDLDMQMIEWAVASEIPVLALLTKSDKLAQSAKMKTVNEVRLALSEFGDWVQVEPFSSLKGTGKPKVLAILNEWCHPQWLTDELDAANNAE</sequence>
<keyword id="KW-0131">Cell cycle</keyword>
<keyword id="KW-0132">Cell division</keyword>
<keyword id="KW-0342">GTP-binding</keyword>
<keyword id="KW-0460">Magnesium</keyword>
<keyword id="KW-0479">Metal-binding</keyword>
<keyword id="KW-0547">Nucleotide-binding</keyword>
<keyword id="KW-0717">Septation</keyword>
<comment type="function">
    <text evidence="1">Necessary for normal cell division and for the maintenance of normal septation.</text>
</comment>
<comment type="cofactor">
    <cofactor evidence="1">
        <name>Mg(2+)</name>
        <dbReference type="ChEBI" id="CHEBI:18420"/>
    </cofactor>
</comment>
<comment type="similarity">
    <text evidence="1">Belongs to the TRAFAC class TrmE-Era-EngA-EngB-Septin-like GTPase superfamily. EngB GTPase family.</text>
</comment>
<protein>
    <recommendedName>
        <fullName evidence="1">Probable GTP-binding protein EngB</fullName>
    </recommendedName>
</protein>
<accession>A6WUH1</accession>
<reference key="1">
    <citation type="submission" date="2007-07" db="EMBL/GenBank/DDBJ databases">
        <title>Complete sequence of chromosome of Shewanella baltica OS185.</title>
        <authorList>
            <consortium name="US DOE Joint Genome Institute"/>
            <person name="Copeland A."/>
            <person name="Lucas S."/>
            <person name="Lapidus A."/>
            <person name="Barry K."/>
            <person name="Glavina del Rio T."/>
            <person name="Dalin E."/>
            <person name="Tice H."/>
            <person name="Pitluck S."/>
            <person name="Sims D."/>
            <person name="Brettin T."/>
            <person name="Bruce D."/>
            <person name="Detter J.C."/>
            <person name="Han C."/>
            <person name="Schmutz J."/>
            <person name="Larimer F."/>
            <person name="Land M."/>
            <person name="Hauser L."/>
            <person name="Kyrpides N."/>
            <person name="Mikhailova N."/>
            <person name="Brettar I."/>
            <person name="Rodrigues J."/>
            <person name="Konstantinidis K."/>
            <person name="Tiedje J."/>
            <person name="Richardson P."/>
        </authorList>
    </citation>
    <scope>NUCLEOTIDE SEQUENCE [LARGE SCALE GENOMIC DNA]</scope>
    <source>
        <strain>OS185</strain>
    </source>
</reference>
<feature type="chain" id="PRO_1000005854" description="Probable GTP-binding protein EngB">
    <location>
        <begin position="1"/>
        <end position="219"/>
    </location>
</feature>
<feature type="domain" description="EngB-type G" evidence="1">
    <location>
        <begin position="31"/>
        <end position="205"/>
    </location>
</feature>
<feature type="binding site" evidence="1">
    <location>
        <begin position="39"/>
        <end position="46"/>
    </location>
    <ligand>
        <name>GTP</name>
        <dbReference type="ChEBI" id="CHEBI:37565"/>
    </ligand>
</feature>
<feature type="binding site" evidence="1">
    <location>
        <position position="46"/>
    </location>
    <ligand>
        <name>Mg(2+)</name>
        <dbReference type="ChEBI" id="CHEBI:18420"/>
    </ligand>
</feature>
<feature type="binding site" evidence="1">
    <location>
        <begin position="66"/>
        <end position="70"/>
    </location>
    <ligand>
        <name>GTP</name>
        <dbReference type="ChEBI" id="CHEBI:37565"/>
    </ligand>
</feature>
<feature type="binding site" evidence="1">
    <location>
        <position position="68"/>
    </location>
    <ligand>
        <name>Mg(2+)</name>
        <dbReference type="ChEBI" id="CHEBI:18420"/>
    </ligand>
</feature>
<feature type="binding site" evidence="1">
    <location>
        <begin position="84"/>
        <end position="87"/>
    </location>
    <ligand>
        <name>GTP</name>
        <dbReference type="ChEBI" id="CHEBI:37565"/>
    </ligand>
</feature>
<feature type="binding site" evidence="1">
    <location>
        <begin position="151"/>
        <end position="154"/>
    </location>
    <ligand>
        <name>GTP</name>
        <dbReference type="ChEBI" id="CHEBI:37565"/>
    </ligand>
</feature>
<feature type="binding site" evidence="1">
    <location>
        <begin position="184"/>
        <end position="186"/>
    </location>
    <ligand>
        <name>GTP</name>
        <dbReference type="ChEBI" id="CHEBI:37565"/>
    </ligand>
</feature>
<proteinExistence type="inferred from homology"/>
<organism>
    <name type="scientific">Shewanella baltica (strain OS185)</name>
    <dbReference type="NCBI Taxonomy" id="402882"/>
    <lineage>
        <taxon>Bacteria</taxon>
        <taxon>Pseudomonadati</taxon>
        <taxon>Pseudomonadota</taxon>
        <taxon>Gammaproteobacteria</taxon>
        <taxon>Alteromonadales</taxon>
        <taxon>Shewanellaceae</taxon>
        <taxon>Shewanella</taxon>
    </lineage>
</organism>
<gene>
    <name evidence="1" type="primary">engB</name>
    <name type="ordered locus">Shew185_4346</name>
</gene>
<name>ENGB_SHEB8</name>
<evidence type="ECO:0000255" key="1">
    <source>
        <dbReference type="HAMAP-Rule" id="MF_00321"/>
    </source>
</evidence>